<sequence length="376" mass="41127">MQVAIPETMKAVVIEDGKAVVKEGIPIPELEEGFVLIKTLAVAGNPTDWAHIDYKIGPQGSILGCDAAGQIVKLGPAVNPKDFSIGDYIYGFIHGSSVRFPSNGAFAEYSAISTVVAYKSPNELKFLGEDVLPAGPVRSLEGVATIPVSLTTAGLVLTYNLGLDLKWEPSTPQRKGPILLWGGATAVGQSLIQLANKLNGFTKIIVVASRKHEKLLKEYGADELFDYHDIDVVEQIKHKYNNISYLVDCVANQDTLQQVYKCAADKQDATIVELKNLTEENVKKENRRQNVTIDIIRLYSIGGHEVPFGNITLPADSEARKAAIKFIKFINPKINDGQIRHIPVRVYKNGLCDVPHILKDIKYGKNSGEKLVAVLN</sequence>
<gene>
    <name type="ordered locus">YLR460C</name>
    <name type="ORF">L9122.7</name>
</gene>
<keyword id="KW-1185">Reference proteome</keyword>
<comment type="miscellaneous">
    <text evidence="1">Present with 799 molecules/cell in log phase SD medium.</text>
</comment>
<comment type="similarity">
    <text evidence="2">Belongs to the YCR102c/YLR460c/YNL134c family.</text>
</comment>
<name>YL460_YEAST</name>
<organism>
    <name type="scientific">Saccharomyces cerevisiae (strain ATCC 204508 / S288c)</name>
    <name type="common">Baker's yeast</name>
    <dbReference type="NCBI Taxonomy" id="559292"/>
    <lineage>
        <taxon>Eukaryota</taxon>
        <taxon>Fungi</taxon>
        <taxon>Dikarya</taxon>
        <taxon>Ascomycota</taxon>
        <taxon>Saccharomycotina</taxon>
        <taxon>Saccharomycetes</taxon>
        <taxon>Saccharomycetales</taxon>
        <taxon>Saccharomycetaceae</taxon>
        <taxon>Saccharomyces</taxon>
    </lineage>
</organism>
<proteinExistence type="evidence at protein level"/>
<evidence type="ECO:0000269" key="1">
    <source>
    </source>
</evidence>
<evidence type="ECO:0000305" key="2"/>
<feature type="chain" id="PRO_0000203236" description="Uncharacterized protein YLR460C">
    <location>
        <begin position="1"/>
        <end position="376"/>
    </location>
</feature>
<protein>
    <recommendedName>
        <fullName>Uncharacterized protein YLR460C</fullName>
    </recommendedName>
</protein>
<dbReference type="EMBL" id="U22383">
    <property type="protein sequence ID" value="AAB64723.1"/>
    <property type="molecule type" value="Genomic_DNA"/>
</dbReference>
<dbReference type="EMBL" id="BK006945">
    <property type="protein sequence ID" value="DAA09759.1"/>
    <property type="molecule type" value="Genomic_DNA"/>
</dbReference>
<dbReference type="PIR" id="S59418">
    <property type="entry name" value="S59418"/>
</dbReference>
<dbReference type="RefSeq" id="NP_013565.3">
    <property type="nucleotide sequence ID" value="NM_001182348.3"/>
</dbReference>
<dbReference type="SMR" id="P54007"/>
<dbReference type="BioGRID" id="31718">
    <property type="interactions" value="26"/>
</dbReference>
<dbReference type="DIP" id="DIP-4698N"/>
<dbReference type="FunCoup" id="P54007">
    <property type="interactions" value="98"/>
</dbReference>
<dbReference type="IntAct" id="P54007">
    <property type="interactions" value="1"/>
</dbReference>
<dbReference type="STRING" id="4932.YLR460C"/>
<dbReference type="PaxDb" id="4932-YLR460C"/>
<dbReference type="PeptideAtlas" id="P54007"/>
<dbReference type="EnsemblFungi" id="YLR460C_mRNA">
    <property type="protein sequence ID" value="YLR460C"/>
    <property type="gene ID" value="YLR460C"/>
</dbReference>
<dbReference type="GeneID" id="851182"/>
<dbReference type="KEGG" id="sce:YLR460C"/>
<dbReference type="AGR" id="SGD:S000004452"/>
<dbReference type="SGD" id="S000004452">
    <property type="gene designation" value="YLR460C"/>
</dbReference>
<dbReference type="VEuPathDB" id="FungiDB:YLR460C"/>
<dbReference type="eggNOG" id="KOG1198">
    <property type="taxonomic scope" value="Eukaryota"/>
</dbReference>
<dbReference type="GeneTree" id="ENSGT00940000176384"/>
<dbReference type="HOGENOM" id="CLU_026673_16_1_1"/>
<dbReference type="InParanoid" id="P54007"/>
<dbReference type="OMA" id="NDIPRQD"/>
<dbReference type="OrthoDB" id="9992527at2759"/>
<dbReference type="BioCyc" id="YEAST:G3O-32512-MONOMER"/>
<dbReference type="BioGRID-ORCS" id="851182">
    <property type="hits" value="0 hits in 10 CRISPR screens"/>
</dbReference>
<dbReference type="PRO" id="PR:P54007"/>
<dbReference type="Proteomes" id="UP000002311">
    <property type="component" value="Chromosome XII"/>
</dbReference>
<dbReference type="RNAct" id="P54007">
    <property type="molecule type" value="protein"/>
</dbReference>
<dbReference type="GO" id="GO:0016651">
    <property type="term" value="F:oxidoreductase activity, acting on NAD(P)H"/>
    <property type="evidence" value="ECO:0007669"/>
    <property type="project" value="InterPro"/>
</dbReference>
<dbReference type="CDD" id="cd08249">
    <property type="entry name" value="enoyl_reductase_like"/>
    <property type="match status" value="1"/>
</dbReference>
<dbReference type="FunFam" id="3.40.50.720:FF:000472">
    <property type="entry name" value="Conserved protein"/>
    <property type="match status" value="1"/>
</dbReference>
<dbReference type="Gene3D" id="3.90.180.10">
    <property type="entry name" value="Medium-chain alcohol dehydrogenases, catalytic domain"/>
    <property type="match status" value="1"/>
</dbReference>
<dbReference type="Gene3D" id="3.40.50.720">
    <property type="entry name" value="NAD(P)-binding Rossmann-like Domain"/>
    <property type="match status" value="1"/>
</dbReference>
<dbReference type="InterPro" id="IPR013149">
    <property type="entry name" value="ADH-like_C"/>
</dbReference>
<dbReference type="InterPro" id="IPR013154">
    <property type="entry name" value="ADH-like_N"/>
</dbReference>
<dbReference type="InterPro" id="IPR011032">
    <property type="entry name" value="GroES-like_sf"/>
</dbReference>
<dbReference type="InterPro" id="IPR036291">
    <property type="entry name" value="NAD(P)-bd_dom_sf"/>
</dbReference>
<dbReference type="InterPro" id="IPR020843">
    <property type="entry name" value="PKS_ER"/>
</dbReference>
<dbReference type="InterPro" id="IPR047122">
    <property type="entry name" value="Trans-enoyl_RdTase-like"/>
</dbReference>
<dbReference type="PANTHER" id="PTHR45348">
    <property type="entry name" value="HYPOTHETICAL OXIDOREDUCTASE (EUROFUNG)"/>
    <property type="match status" value="1"/>
</dbReference>
<dbReference type="PANTHER" id="PTHR45348:SF2">
    <property type="entry name" value="ZINC-TYPE ALCOHOL DEHYDROGENASE-LIKE PROTEIN C2E1P3.01"/>
    <property type="match status" value="1"/>
</dbReference>
<dbReference type="Pfam" id="PF08240">
    <property type="entry name" value="ADH_N"/>
    <property type="match status" value="1"/>
</dbReference>
<dbReference type="Pfam" id="PF00107">
    <property type="entry name" value="ADH_zinc_N"/>
    <property type="match status" value="1"/>
</dbReference>
<dbReference type="SMART" id="SM00829">
    <property type="entry name" value="PKS_ER"/>
    <property type="match status" value="1"/>
</dbReference>
<dbReference type="SUPFAM" id="SSF50129">
    <property type="entry name" value="GroES-like"/>
    <property type="match status" value="1"/>
</dbReference>
<dbReference type="SUPFAM" id="SSF51735">
    <property type="entry name" value="NAD(P)-binding Rossmann-fold domains"/>
    <property type="match status" value="1"/>
</dbReference>
<accession>P54007</accession>
<accession>D6VZ93</accession>
<reference key="1">
    <citation type="journal article" date="1997" name="Nature">
        <title>The nucleotide sequence of Saccharomyces cerevisiae chromosome XII.</title>
        <authorList>
            <person name="Johnston M."/>
            <person name="Hillier L.W."/>
            <person name="Riles L."/>
            <person name="Albermann K."/>
            <person name="Andre B."/>
            <person name="Ansorge W."/>
            <person name="Benes V."/>
            <person name="Brueckner M."/>
            <person name="Delius H."/>
            <person name="Dubois E."/>
            <person name="Duesterhoeft A."/>
            <person name="Entian K.-D."/>
            <person name="Floeth M."/>
            <person name="Goffeau A."/>
            <person name="Hebling U."/>
            <person name="Heumann K."/>
            <person name="Heuss-Neitzel D."/>
            <person name="Hilbert H."/>
            <person name="Hilger F."/>
            <person name="Kleine K."/>
            <person name="Koetter P."/>
            <person name="Louis E.J."/>
            <person name="Messenguy F."/>
            <person name="Mewes H.-W."/>
            <person name="Miosga T."/>
            <person name="Moestl D."/>
            <person name="Mueller-Auer S."/>
            <person name="Nentwich U."/>
            <person name="Obermaier B."/>
            <person name="Piravandi E."/>
            <person name="Pohl T.M."/>
            <person name="Portetelle D."/>
            <person name="Purnelle B."/>
            <person name="Rechmann S."/>
            <person name="Rieger M."/>
            <person name="Rinke M."/>
            <person name="Rose M."/>
            <person name="Scharfe M."/>
            <person name="Scherens B."/>
            <person name="Scholler P."/>
            <person name="Schwager C."/>
            <person name="Schwarz S."/>
            <person name="Underwood A.P."/>
            <person name="Urrestarazu L.A."/>
            <person name="Vandenbol M."/>
            <person name="Verhasselt P."/>
            <person name="Vierendeels F."/>
            <person name="Voet M."/>
            <person name="Volckaert G."/>
            <person name="Voss H."/>
            <person name="Wambutt R."/>
            <person name="Wedler E."/>
            <person name="Wedler H."/>
            <person name="Zimmermann F.K."/>
            <person name="Zollner A."/>
            <person name="Hani J."/>
            <person name="Hoheisel J.D."/>
        </authorList>
    </citation>
    <scope>NUCLEOTIDE SEQUENCE [LARGE SCALE GENOMIC DNA]</scope>
    <source>
        <strain>ATCC 204508 / S288c</strain>
    </source>
</reference>
<reference key="2">
    <citation type="journal article" date="2014" name="G3 (Bethesda)">
        <title>The reference genome sequence of Saccharomyces cerevisiae: Then and now.</title>
        <authorList>
            <person name="Engel S.R."/>
            <person name="Dietrich F.S."/>
            <person name="Fisk D.G."/>
            <person name="Binkley G."/>
            <person name="Balakrishnan R."/>
            <person name="Costanzo M.C."/>
            <person name="Dwight S.S."/>
            <person name="Hitz B.C."/>
            <person name="Karra K."/>
            <person name="Nash R.S."/>
            <person name="Weng S."/>
            <person name="Wong E.D."/>
            <person name="Lloyd P."/>
            <person name="Skrzypek M.S."/>
            <person name="Miyasato S.R."/>
            <person name="Simison M."/>
            <person name="Cherry J.M."/>
        </authorList>
    </citation>
    <scope>GENOME REANNOTATION</scope>
    <source>
        <strain>ATCC 204508 / S288c</strain>
    </source>
</reference>
<reference key="3">
    <citation type="journal article" date="2003" name="Nature">
        <title>Global analysis of protein expression in yeast.</title>
        <authorList>
            <person name="Ghaemmaghami S."/>
            <person name="Huh W.-K."/>
            <person name="Bower K."/>
            <person name="Howson R.W."/>
            <person name="Belle A."/>
            <person name="Dephoure N."/>
            <person name="O'Shea E.K."/>
            <person name="Weissman J.S."/>
        </authorList>
    </citation>
    <scope>LEVEL OF PROTEIN EXPRESSION [LARGE SCALE ANALYSIS]</scope>
</reference>